<dbReference type="EMBL" id="CM001232">
    <property type="protein sequence ID" value="EHA55491.1"/>
    <property type="status" value="ALT_INIT"/>
    <property type="molecule type" value="Genomic_DNA"/>
</dbReference>
<dbReference type="RefSeq" id="XP_003715298.1">
    <property type="nucleotide sequence ID" value="XM_003715250.1"/>
</dbReference>
<dbReference type="SMR" id="A4RHN3"/>
<dbReference type="FunCoup" id="A4RHN3">
    <property type="interactions" value="1093"/>
</dbReference>
<dbReference type="STRING" id="242507.A4RHN3"/>
<dbReference type="GeneID" id="2682994"/>
<dbReference type="KEGG" id="mgr:MGG_07109"/>
<dbReference type="eggNOG" id="KOG0122">
    <property type="taxonomic scope" value="Eukaryota"/>
</dbReference>
<dbReference type="InParanoid" id="A4RHN3"/>
<dbReference type="OrthoDB" id="639027at2759"/>
<dbReference type="Proteomes" id="UP000009058">
    <property type="component" value="Chromosome 2"/>
</dbReference>
<dbReference type="GO" id="GO:0016282">
    <property type="term" value="C:eukaryotic 43S preinitiation complex"/>
    <property type="evidence" value="ECO:0007669"/>
    <property type="project" value="UniProtKB-UniRule"/>
</dbReference>
<dbReference type="GO" id="GO:0033290">
    <property type="term" value="C:eukaryotic 48S preinitiation complex"/>
    <property type="evidence" value="ECO:0007669"/>
    <property type="project" value="UniProtKB-UniRule"/>
</dbReference>
<dbReference type="GO" id="GO:0005852">
    <property type="term" value="C:eukaryotic translation initiation factor 3 complex"/>
    <property type="evidence" value="ECO:0007669"/>
    <property type="project" value="UniProtKB-UniRule"/>
</dbReference>
<dbReference type="GO" id="GO:0003723">
    <property type="term" value="F:RNA binding"/>
    <property type="evidence" value="ECO:0007669"/>
    <property type="project" value="UniProtKB-UniRule"/>
</dbReference>
<dbReference type="GO" id="GO:0003743">
    <property type="term" value="F:translation initiation factor activity"/>
    <property type="evidence" value="ECO:0007669"/>
    <property type="project" value="UniProtKB-UniRule"/>
</dbReference>
<dbReference type="GO" id="GO:0001732">
    <property type="term" value="P:formation of cytoplasmic translation initiation complex"/>
    <property type="evidence" value="ECO:0007669"/>
    <property type="project" value="UniProtKB-UniRule"/>
</dbReference>
<dbReference type="CDD" id="cd12933">
    <property type="entry name" value="eIF3G"/>
    <property type="match status" value="1"/>
</dbReference>
<dbReference type="CDD" id="cd12408">
    <property type="entry name" value="RRM_eIF3G_like"/>
    <property type="match status" value="1"/>
</dbReference>
<dbReference type="FunFam" id="3.30.70.330:FF:000328">
    <property type="entry name" value="Eukaryotic translation initiation factor 3 subunit G"/>
    <property type="match status" value="1"/>
</dbReference>
<dbReference type="Gene3D" id="3.30.70.330">
    <property type="match status" value="1"/>
</dbReference>
<dbReference type="HAMAP" id="MF_03006">
    <property type="entry name" value="eIF3g"/>
    <property type="match status" value="1"/>
</dbReference>
<dbReference type="InterPro" id="IPR017334">
    <property type="entry name" value="eIF3_g"/>
</dbReference>
<dbReference type="InterPro" id="IPR024675">
    <property type="entry name" value="eIF3g_N"/>
</dbReference>
<dbReference type="InterPro" id="IPR034240">
    <property type="entry name" value="eIF3G_RRM"/>
</dbReference>
<dbReference type="InterPro" id="IPR012677">
    <property type="entry name" value="Nucleotide-bd_a/b_plait_sf"/>
</dbReference>
<dbReference type="InterPro" id="IPR035979">
    <property type="entry name" value="RBD_domain_sf"/>
</dbReference>
<dbReference type="InterPro" id="IPR000504">
    <property type="entry name" value="RRM_dom"/>
</dbReference>
<dbReference type="PANTHER" id="PTHR10352">
    <property type="entry name" value="EUKARYOTIC TRANSLATION INITIATION FACTOR 3 SUBUNIT G"/>
    <property type="match status" value="1"/>
</dbReference>
<dbReference type="Pfam" id="PF12353">
    <property type="entry name" value="eIF3g"/>
    <property type="match status" value="1"/>
</dbReference>
<dbReference type="Pfam" id="PF00076">
    <property type="entry name" value="RRM_1"/>
    <property type="match status" value="1"/>
</dbReference>
<dbReference type="PIRSF" id="PIRSF037949">
    <property type="entry name" value="Transl_init_eIF-3_RNA-bind"/>
    <property type="match status" value="1"/>
</dbReference>
<dbReference type="SMART" id="SM00360">
    <property type="entry name" value="RRM"/>
    <property type="match status" value="1"/>
</dbReference>
<dbReference type="SUPFAM" id="SSF54928">
    <property type="entry name" value="RNA-binding domain, RBD"/>
    <property type="match status" value="1"/>
</dbReference>
<dbReference type="PROSITE" id="PS50102">
    <property type="entry name" value="RRM"/>
    <property type="match status" value="1"/>
</dbReference>
<gene>
    <name evidence="1" type="primary">TIF35</name>
    <name type="ORF">MGG_07109</name>
</gene>
<keyword id="KW-0963">Cytoplasm</keyword>
<keyword id="KW-0396">Initiation factor</keyword>
<keyword id="KW-0648">Protein biosynthesis</keyword>
<keyword id="KW-1185">Reference proteome</keyword>
<keyword id="KW-0694">RNA-binding</keyword>
<comment type="function">
    <text evidence="1">RNA-binding component of the eukaryotic translation initiation factor 3 (eIF-3) complex, which is involved in protein synthesis of a specialized repertoire of mRNAs and, together with other initiation factors, stimulates binding of mRNA and methionyl-tRNAi to the 40S ribosome. The eIF-3 complex specifically targets and initiates translation of a subset of mRNAs involved in cell proliferation. This subunit can bind 18S rRNA.</text>
</comment>
<comment type="subunit">
    <text evidence="1">Component of the eukaryotic translation initiation factor 3 (eIF-3) complex.</text>
</comment>
<comment type="subcellular location">
    <subcellularLocation>
        <location evidence="1">Cytoplasm</location>
    </subcellularLocation>
</comment>
<comment type="similarity">
    <text evidence="1">Belongs to the eIF-3 subunit G family.</text>
</comment>
<comment type="sequence caution" evidence="3">
    <conflict type="erroneous initiation">
        <sequence resource="EMBL-CDS" id="EHA55491"/>
    </conflict>
    <text>Extended N-terminus.</text>
</comment>
<evidence type="ECO:0000255" key="1">
    <source>
        <dbReference type="HAMAP-Rule" id="MF_03006"/>
    </source>
</evidence>
<evidence type="ECO:0000256" key="2">
    <source>
        <dbReference type="SAM" id="MobiDB-lite"/>
    </source>
</evidence>
<evidence type="ECO:0000305" key="3"/>
<accession>A4RHN3</accession>
<accession>G4MSS0</accession>
<organism>
    <name type="scientific">Pyricularia oryzae (strain 70-15 / ATCC MYA-4617 / FGSC 8958)</name>
    <name type="common">Rice blast fungus</name>
    <name type="synonym">Magnaporthe oryzae</name>
    <dbReference type="NCBI Taxonomy" id="242507"/>
    <lineage>
        <taxon>Eukaryota</taxon>
        <taxon>Fungi</taxon>
        <taxon>Dikarya</taxon>
        <taxon>Ascomycota</taxon>
        <taxon>Pezizomycotina</taxon>
        <taxon>Sordariomycetes</taxon>
        <taxon>Sordariomycetidae</taxon>
        <taxon>Magnaporthales</taxon>
        <taxon>Pyriculariaceae</taxon>
        <taxon>Pyricularia</taxon>
    </lineage>
</organism>
<reference key="1">
    <citation type="journal article" date="2005" name="Nature">
        <title>The genome sequence of the rice blast fungus Magnaporthe grisea.</title>
        <authorList>
            <person name="Dean R.A."/>
            <person name="Talbot N.J."/>
            <person name="Ebbole D.J."/>
            <person name="Farman M.L."/>
            <person name="Mitchell T.K."/>
            <person name="Orbach M.J."/>
            <person name="Thon M.R."/>
            <person name="Kulkarni R."/>
            <person name="Xu J.-R."/>
            <person name="Pan H."/>
            <person name="Read N.D."/>
            <person name="Lee Y.-H."/>
            <person name="Carbone I."/>
            <person name="Brown D."/>
            <person name="Oh Y.Y."/>
            <person name="Donofrio N."/>
            <person name="Jeong J.S."/>
            <person name="Soanes D.M."/>
            <person name="Djonovic S."/>
            <person name="Kolomiets E."/>
            <person name="Rehmeyer C."/>
            <person name="Li W."/>
            <person name="Harding M."/>
            <person name="Kim S."/>
            <person name="Lebrun M.-H."/>
            <person name="Bohnert H."/>
            <person name="Coughlan S."/>
            <person name="Butler J."/>
            <person name="Calvo S.E."/>
            <person name="Ma L.-J."/>
            <person name="Nicol R."/>
            <person name="Purcell S."/>
            <person name="Nusbaum C."/>
            <person name="Galagan J.E."/>
            <person name="Birren B.W."/>
        </authorList>
    </citation>
    <scope>NUCLEOTIDE SEQUENCE [LARGE SCALE GENOMIC DNA]</scope>
    <source>
        <strain>70-15 / ATCC MYA-4617 / FGSC 8958</strain>
    </source>
</reference>
<feature type="chain" id="PRO_0000365446" description="Eukaryotic translation initiation factor 3 subunit G">
    <location>
        <begin position="1"/>
        <end position="303"/>
    </location>
</feature>
<feature type="domain" description="RRM" evidence="1">
    <location>
        <begin position="223"/>
        <end position="301"/>
    </location>
</feature>
<feature type="region of interest" description="Disordered" evidence="2">
    <location>
        <begin position="1"/>
        <end position="32"/>
    </location>
</feature>
<feature type="region of interest" description="Disordered" evidence="2">
    <location>
        <begin position="81"/>
        <end position="100"/>
    </location>
</feature>
<feature type="region of interest" description="Disordered" evidence="2">
    <location>
        <begin position="105"/>
        <end position="126"/>
    </location>
</feature>
<feature type="region of interest" description="Disordered" evidence="2">
    <location>
        <begin position="181"/>
        <end position="215"/>
    </location>
</feature>
<feature type="compositionally biased region" description="Basic and acidic residues" evidence="2">
    <location>
        <begin position="109"/>
        <end position="126"/>
    </location>
</feature>
<proteinExistence type="inferred from homology"/>
<sequence length="303" mass="32965">MAAVAKPVQAWADDDDIDDGTTERLPDPQTIVNKDGTKTIISWRFNDQGQKVKTTRRVRLTTHREVVNPRVAERKKWEKFGLSAKDGPGPASDTTSVGENIIFRPSANWRKDQKDESKDANANAMKDKLKDKKVKCRICNGEHFTARCPYKDTMAPIGEAAPAGGVGGGGDDEGGILSAPGAAGGAGAKKGSYVPPALRGDRKEGEKMGGGAGGKYGERDDLATLRVTNVSEMAEEQELRDMFERFGRVTRVFLAKDRDTGLAKGFAFISFADREDAVKACNKMDGWGFKHLILRVEFAKKAT</sequence>
<protein>
    <recommendedName>
        <fullName evidence="1">Eukaryotic translation initiation factor 3 subunit G</fullName>
        <shortName evidence="1">eIF3g</shortName>
    </recommendedName>
    <alternativeName>
        <fullName evidence="1">Eukaryotic translation initiation factor 3 RNA-binding subunit</fullName>
        <shortName evidence="1">eIF-3 RNA-binding subunit</shortName>
    </alternativeName>
    <alternativeName>
        <fullName evidence="1">Translation initiation factor eIF3 p33 subunit homolog</fullName>
        <shortName evidence="1">eIF3 p33 homolog</shortName>
    </alternativeName>
</protein>
<name>EIF3G_PYRO7</name>